<name>NDHH_PICP2</name>
<evidence type="ECO:0000255" key="1">
    <source>
        <dbReference type="HAMAP-Rule" id="MF_01358"/>
    </source>
</evidence>
<proteinExistence type="inferred from homology"/>
<organism>
    <name type="scientific">Picosynechococcus sp. (strain ATCC 27264 / PCC 7002 / PR-6)</name>
    <name type="common">Agmenellum quadruplicatum</name>
    <dbReference type="NCBI Taxonomy" id="32049"/>
    <lineage>
        <taxon>Bacteria</taxon>
        <taxon>Bacillati</taxon>
        <taxon>Cyanobacteriota</taxon>
        <taxon>Cyanophyceae</taxon>
        <taxon>Oscillatoriophycideae</taxon>
        <taxon>Chroococcales</taxon>
        <taxon>Geminocystaceae</taxon>
        <taxon>Picosynechococcus</taxon>
    </lineage>
</organism>
<dbReference type="EC" id="7.1.1.-" evidence="1"/>
<dbReference type="EMBL" id="AF381041">
    <property type="protein sequence ID" value="AAN03556.1"/>
    <property type="molecule type" value="Genomic_DNA"/>
</dbReference>
<dbReference type="EMBL" id="CP000951">
    <property type="protein sequence ID" value="ACB00518.1"/>
    <property type="molecule type" value="Genomic_DNA"/>
</dbReference>
<dbReference type="RefSeq" id="WP_012308136.1">
    <property type="nucleotide sequence ID" value="NZ_JAHHPU010000003.1"/>
</dbReference>
<dbReference type="SMR" id="Q8KX37"/>
<dbReference type="STRING" id="32049.SYNPCC7002_A2541"/>
<dbReference type="KEGG" id="syp:SYNPCC7002_A2541"/>
<dbReference type="eggNOG" id="COG0649">
    <property type="taxonomic scope" value="Bacteria"/>
</dbReference>
<dbReference type="HOGENOM" id="CLU_015134_1_2_3"/>
<dbReference type="Proteomes" id="UP000001688">
    <property type="component" value="Chromosome"/>
</dbReference>
<dbReference type="GO" id="GO:0031676">
    <property type="term" value="C:plasma membrane-derived thylakoid membrane"/>
    <property type="evidence" value="ECO:0007669"/>
    <property type="project" value="UniProtKB-SubCell"/>
</dbReference>
<dbReference type="GO" id="GO:0051287">
    <property type="term" value="F:NAD binding"/>
    <property type="evidence" value="ECO:0007669"/>
    <property type="project" value="InterPro"/>
</dbReference>
<dbReference type="GO" id="GO:0016655">
    <property type="term" value="F:oxidoreductase activity, acting on NAD(P)H, quinone or similar compound as acceptor"/>
    <property type="evidence" value="ECO:0007669"/>
    <property type="project" value="UniProtKB-UniRule"/>
</dbReference>
<dbReference type="GO" id="GO:0048038">
    <property type="term" value="F:quinone binding"/>
    <property type="evidence" value="ECO:0007669"/>
    <property type="project" value="UniProtKB-KW"/>
</dbReference>
<dbReference type="GO" id="GO:0019684">
    <property type="term" value="P:photosynthesis, light reaction"/>
    <property type="evidence" value="ECO:0007669"/>
    <property type="project" value="UniProtKB-UniRule"/>
</dbReference>
<dbReference type="Gene3D" id="1.10.645.10">
    <property type="entry name" value="Cytochrome-c3 Hydrogenase, chain B"/>
    <property type="match status" value="1"/>
</dbReference>
<dbReference type="HAMAP" id="MF_01358">
    <property type="entry name" value="NDH1_NuoD"/>
    <property type="match status" value="1"/>
</dbReference>
<dbReference type="InterPro" id="IPR001135">
    <property type="entry name" value="NADH_Q_OxRdtase_suD"/>
</dbReference>
<dbReference type="InterPro" id="IPR014029">
    <property type="entry name" value="NADH_UbQ_OxRdtase_49kDa_CS"/>
</dbReference>
<dbReference type="InterPro" id="IPR022885">
    <property type="entry name" value="NDH1_su_D/H"/>
</dbReference>
<dbReference type="InterPro" id="IPR029014">
    <property type="entry name" value="NiFe-Hase_large"/>
</dbReference>
<dbReference type="NCBIfam" id="NF004739">
    <property type="entry name" value="PRK06075.1"/>
    <property type="match status" value="1"/>
</dbReference>
<dbReference type="NCBIfam" id="NF005649">
    <property type="entry name" value="PRK07415.1"/>
    <property type="match status" value="1"/>
</dbReference>
<dbReference type="PANTHER" id="PTHR11993:SF10">
    <property type="entry name" value="NADH DEHYDROGENASE [UBIQUINONE] IRON-SULFUR PROTEIN 2, MITOCHONDRIAL"/>
    <property type="match status" value="1"/>
</dbReference>
<dbReference type="PANTHER" id="PTHR11993">
    <property type="entry name" value="NADH-UBIQUINONE OXIDOREDUCTASE 49 KDA SUBUNIT"/>
    <property type="match status" value="1"/>
</dbReference>
<dbReference type="Pfam" id="PF00346">
    <property type="entry name" value="Complex1_49kDa"/>
    <property type="match status" value="1"/>
</dbReference>
<dbReference type="SUPFAM" id="SSF56762">
    <property type="entry name" value="HydB/Nqo4-like"/>
    <property type="match status" value="1"/>
</dbReference>
<dbReference type="PROSITE" id="PS00535">
    <property type="entry name" value="COMPLEX1_49K"/>
    <property type="match status" value="1"/>
</dbReference>
<comment type="function">
    <text evidence="1">NDH-1 shuttles electrons from an unknown electron donor, via FMN and iron-sulfur (Fe-S) centers, to quinones in the respiratory and/or the photosynthetic chain. The immediate electron acceptor for the enzyme in this species is believed to be plastoquinone. Couples the redox reaction to proton translocation, and thus conserves the redox energy in a proton gradient. Cyanobacterial NDH-1 also plays a role in inorganic carbon-concentration.</text>
</comment>
<comment type="catalytic activity">
    <reaction evidence="1">
        <text>a plastoquinone + NADH + (n+1) H(+)(in) = a plastoquinol + NAD(+) + n H(+)(out)</text>
        <dbReference type="Rhea" id="RHEA:42608"/>
        <dbReference type="Rhea" id="RHEA-COMP:9561"/>
        <dbReference type="Rhea" id="RHEA-COMP:9562"/>
        <dbReference type="ChEBI" id="CHEBI:15378"/>
        <dbReference type="ChEBI" id="CHEBI:17757"/>
        <dbReference type="ChEBI" id="CHEBI:57540"/>
        <dbReference type="ChEBI" id="CHEBI:57945"/>
        <dbReference type="ChEBI" id="CHEBI:62192"/>
    </reaction>
</comment>
<comment type="catalytic activity">
    <reaction evidence="1">
        <text>a plastoquinone + NADPH + (n+1) H(+)(in) = a plastoquinol + NADP(+) + n H(+)(out)</text>
        <dbReference type="Rhea" id="RHEA:42612"/>
        <dbReference type="Rhea" id="RHEA-COMP:9561"/>
        <dbReference type="Rhea" id="RHEA-COMP:9562"/>
        <dbReference type="ChEBI" id="CHEBI:15378"/>
        <dbReference type="ChEBI" id="CHEBI:17757"/>
        <dbReference type="ChEBI" id="CHEBI:57783"/>
        <dbReference type="ChEBI" id="CHEBI:58349"/>
        <dbReference type="ChEBI" id="CHEBI:62192"/>
    </reaction>
</comment>
<comment type="subunit">
    <text evidence="1">NDH-1 can be composed of about 15 different subunits; different subcomplexes with different compositions have been identified which probably have different functions.</text>
</comment>
<comment type="subcellular location">
    <subcellularLocation>
        <location evidence="1">Cellular thylakoid membrane</location>
        <topology evidence="1">Peripheral membrane protein</topology>
        <orientation evidence="1">Cytoplasmic side</orientation>
    </subcellularLocation>
</comment>
<comment type="similarity">
    <text evidence="1">Belongs to the complex I 49 kDa subunit family.</text>
</comment>
<reference key="1">
    <citation type="submission" date="2001-05" db="EMBL/GenBank/DDBJ databases">
        <title>An analysis of forty genes encoding electron transport proteins from Synechococcus sp. PCC 7002: a comparative study of electron transport proteins from cyanobacteria and chloroplasts.</title>
        <authorList>
            <person name="Nomura C.T."/>
            <person name="Persson S."/>
            <person name="Zhao J."/>
            <person name="Bryant D.A."/>
        </authorList>
    </citation>
    <scope>NUCLEOTIDE SEQUENCE [GENOMIC DNA]</scope>
</reference>
<reference key="2">
    <citation type="submission" date="2008-02" db="EMBL/GenBank/DDBJ databases">
        <title>Complete sequence of Synechococcus sp. PCC 7002.</title>
        <authorList>
            <person name="Li T."/>
            <person name="Zhao J."/>
            <person name="Zhao C."/>
            <person name="Liu Z."/>
            <person name="Zhao F."/>
            <person name="Marquardt J."/>
            <person name="Nomura C.T."/>
            <person name="Persson S."/>
            <person name="Detter J.C."/>
            <person name="Richardson P.M."/>
            <person name="Lanz C."/>
            <person name="Schuster S.C."/>
            <person name="Wang J."/>
            <person name="Li S."/>
            <person name="Huang X."/>
            <person name="Cai T."/>
            <person name="Yu Z."/>
            <person name="Luo J."/>
            <person name="Zhao J."/>
            <person name="Bryant D.A."/>
        </authorList>
    </citation>
    <scope>NUCLEOTIDE SEQUENCE [LARGE SCALE GENOMIC DNA]</scope>
    <source>
        <strain>ATCC 27264 / PCC 7002 / PR-6</strain>
    </source>
</reference>
<keyword id="KW-0472">Membrane</keyword>
<keyword id="KW-0520">NAD</keyword>
<keyword id="KW-0521">NADP</keyword>
<keyword id="KW-0618">Plastoquinone</keyword>
<keyword id="KW-0874">Quinone</keyword>
<keyword id="KW-1185">Reference proteome</keyword>
<keyword id="KW-0793">Thylakoid</keyword>
<keyword id="KW-1278">Translocase</keyword>
<keyword id="KW-0813">Transport</keyword>
<feature type="chain" id="PRO_0000371932" description="NAD(P)H-quinone oxidoreductase subunit H">
    <location>
        <begin position="1"/>
        <end position="394"/>
    </location>
</feature>
<gene>
    <name evidence="1" type="primary">ndhH</name>
    <name type="ordered locus">SYNPCC7002_A2541</name>
</gene>
<protein>
    <recommendedName>
        <fullName evidence="1">NAD(P)H-quinone oxidoreductase subunit H</fullName>
        <ecNumber evidence="1">7.1.1.-</ecNumber>
    </recommendedName>
    <alternativeName>
        <fullName>NAD(P)H dehydrogenase subunit H</fullName>
    </alternativeName>
    <alternativeName>
        <fullName evidence="1">NADH-plastoquinone oxidoreductase subunit H</fullName>
    </alternativeName>
    <alternativeName>
        <fullName evidence="1">NDH-1 subunit H</fullName>
        <shortName evidence="1">NDH-H</shortName>
    </alternativeName>
</protein>
<accession>Q8KX37</accession>
<sequence>MTRIETRTEPMVINMGPHHPSMHGVLRLIVTLDGEDVVDCEPVIGYLHRGMEKIAENRTNVMYVPYVSRWDYAAGMFNEAITVNAPEKLADIEVPKRAQYIRVIMLELNRIANHLLWLGPFLADVGAQTPFFYIFREREMIYDLWEAATGMRLINNNYFRIGGVAVDLPYGWNDKCLDFCDYFDPKVDEYEKLITNNPIFRRRVEGVGTITRDEAINWSLSGPMLRASGVKWDLRKVDHYECYDDFDWDVQWETAGDCFARYLVRIREMRESVKIIRQALKGMPGGAYENLEAKRMLEGKKSEWNDFDYQYIAKKVAPTFKIPDGEHYVRLESGKGEVGIFIQGNNNVFPWRWKIRSADFNNLQILPHLLKGVKVADIMAILGSIDVIMGSVDR</sequence>